<comment type="subcellular location">
    <subcellularLocation>
        <location evidence="2">Host cytoplasm</location>
    </subcellularLocation>
</comment>
<comment type="induction">
    <text evidence="1">Expressed in the late phase of the viral replicative cycle. Expression of late genes is activated by the viral late transcription activator C.</text>
</comment>
<feature type="chain" id="PRO_0000077819" description="Uncharacterized protein gp26">
    <location>
        <begin position="1"/>
        <end position="96"/>
    </location>
</feature>
<organism>
    <name type="scientific">Escherichia phage Mu</name>
    <name type="common">Bacteriophage Mu</name>
    <dbReference type="NCBI Taxonomy" id="2681603"/>
    <lineage>
        <taxon>Viruses</taxon>
        <taxon>Duplodnaviria</taxon>
        <taxon>Heunggongvirae</taxon>
        <taxon>Uroviricota</taxon>
        <taxon>Caudoviricetes</taxon>
        <taxon>Muvirus</taxon>
        <taxon>Muvirus mu</taxon>
    </lineage>
</organism>
<accession>Q9T1W8</accession>
<reference key="1">
    <citation type="journal article" date="2002" name="J. Mol. Biol.">
        <title>Bacteriophage Mu genome sequence: analysis and comparison with Mu-like prophages in Haemophilus, Neisseria and Deinococcus.</title>
        <authorList>
            <person name="Morgan G.J."/>
            <person name="Hatfull G.F."/>
            <person name="Casjens S."/>
            <person name="Hendrix R.W."/>
        </authorList>
    </citation>
    <scope>NUCLEOTIDE SEQUENCE [LARGE SCALE GENOMIC DNA]</scope>
</reference>
<reference key="2">
    <citation type="journal article" date="1993" name="Genetics">
        <title>Mutational analysis of a C-dependent late promoter of bacteriophage Mu.</title>
        <authorList>
            <person name="Chiang L.W."/>
            <person name="Howe M.M."/>
        </authorList>
    </citation>
    <scope>INDUCTION</scope>
</reference>
<name>GP26_BPMU</name>
<organismHost>
    <name type="scientific">Enterobacteriaceae</name>
    <dbReference type="NCBI Taxonomy" id="543"/>
</organismHost>
<proteinExistence type="evidence at transcript level"/>
<evidence type="ECO:0000269" key="1">
    <source>
    </source>
</evidence>
<evidence type="ECO:0000305" key="2"/>
<sequence length="96" mass="10881">MINDILTEDRRLVILRSLMDCNNEANESILQDCLDAYGHNVSRDVVRGQIDWLAEQQLVTVENLRGFYVVTLTSRGQDVAEGRARVAGVKRPRPRA</sequence>
<keyword id="KW-1035">Host cytoplasm</keyword>
<keyword id="KW-0426">Late protein</keyword>
<keyword id="KW-1185">Reference proteome</keyword>
<gene>
    <name type="ordered locus">Mup26</name>
</gene>
<dbReference type="EMBL" id="AF083977">
    <property type="protein sequence ID" value="AAF01104.1"/>
    <property type="molecule type" value="Genomic_DNA"/>
</dbReference>
<dbReference type="RefSeq" id="NP_050630.1">
    <property type="nucleotide sequence ID" value="NC_000929.1"/>
</dbReference>
<dbReference type="SMR" id="Q9T1W8"/>
<dbReference type="GeneID" id="2636255"/>
<dbReference type="KEGG" id="vg:2636255"/>
<dbReference type="Proteomes" id="UP000002611">
    <property type="component" value="Genome"/>
</dbReference>
<dbReference type="GO" id="GO:0030430">
    <property type="term" value="C:host cell cytoplasm"/>
    <property type="evidence" value="ECO:0007669"/>
    <property type="project" value="UniProtKB-SubCell"/>
</dbReference>
<dbReference type="InterPro" id="IPR036390">
    <property type="entry name" value="WH_DNA-bd_sf"/>
</dbReference>
<dbReference type="SUPFAM" id="SSF46785">
    <property type="entry name" value="Winged helix' DNA-binding domain"/>
    <property type="match status" value="1"/>
</dbReference>
<protein>
    <recommendedName>
        <fullName>Uncharacterized protein gp26</fullName>
    </recommendedName>
    <alternativeName>
        <fullName>Gene product 26</fullName>
        <shortName>gp26</shortName>
    </alternativeName>
</protein>